<comment type="function">
    <text evidence="1">Catalyzes the formation of N(7)-methylguanine at position 46 (m7G46) in tRNA.</text>
</comment>
<comment type="catalytic activity">
    <reaction evidence="1">
        <text>guanosine(46) in tRNA + S-adenosyl-L-methionine = N(7)-methylguanosine(46) in tRNA + S-adenosyl-L-homocysteine</text>
        <dbReference type="Rhea" id="RHEA:42708"/>
        <dbReference type="Rhea" id="RHEA-COMP:10188"/>
        <dbReference type="Rhea" id="RHEA-COMP:10189"/>
        <dbReference type="ChEBI" id="CHEBI:57856"/>
        <dbReference type="ChEBI" id="CHEBI:59789"/>
        <dbReference type="ChEBI" id="CHEBI:74269"/>
        <dbReference type="ChEBI" id="CHEBI:74480"/>
        <dbReference type="EC" id="2.1.1.33"/>
    </reaction>
</comment>
<comment type="pathway">
    <text evidence="1">tRNA modification; N(7)-methylguanine-tRNA biosynthesis.</text>
</comment>
<comment type="subcellular location">
    <subcellularLocation>
        <location evidence="1">Nucleus</location>
    </subcellularLocation>
</comment>
<comment type="similarity">
    <text evidence="1">Belongs to the class I-like SAM-binding methyltransferase superfamily. TrmB family.</text>
</comment>
<protein>
    <recommendedName>
        <fullName evidence="1">tRNA (guanine-N(7)-)-methyltransferase</fullName>
        <ecNumber evidence="1">2.1.1.33</ecNumber>
    </recommendedName>
    <alternativeName>
        <fullName evidence="1">tRNA (guanine(46)-N(7))-methyltransferase</fullName>
    </alternativeName>
    <alternativeName>
        <fullName evidence="1">tRNA(m7G46)-methyltransferase</fullName>
    </alternativeName>
</protein>
<keyword id="KW-0489">Methyltransferase</keyword>
<keyword id="KW-0539">Nucleus</keyword>
<keyword id="KW-1185">Reference proteome</keyword>
<keyword id="KW-0694">RNA-binding</keyword>
<keyword id="KW-0949">S-adenosyl-L-methionine</keyword>
<keyword id="KW-0808">Transferase</keyword>
<keyword id="KW-0819">tRNA processing</keyword>
<keyword id="KW-0820">tRNA-binding</keyword>
<accession>Q23126</accession>
<reference key="1">
    <citation type="journal article" date="1998" name="Science">
        <title>Genome sequence of the nematode C. elegans: a platform for investigating biology.</title>
        <authorList>
            <consortium name="The C. elegans sequencing consortium"/>
        </authorList>
    </citation>
    <scope>NUCLEOTIDE SEQUENCE [LARGE SCALE GENOMIC DNA]</scope>
    <source>
        <strain>Bristol N2</strain>
    </source>
</reference>
<evidence type="ECO:0000255" key="1">
    <source>
        <dbReference type="HAMAP-Rule" id="MF_03055"/>
    </source>
</evidence>
<evidence type="ECO:0000256" key="2">
    <source>
        <dbReference type="SAM" id="MobiDB-lite"/>
    </source>
</evidence>
<evidence type="ECO:0000312" key="3">
    <source>
        <dbReference type="WormBase" id="W02B12.10"/>
    </source>
</evidence>
<sequence length="256" mass="30041">MDITPALTEMELDHKPTCETVPGLPQKKHYRQRAHSNPHSDHDIEYPLTPNHMDWTKYYGDYTKGRQVDFADIGCGYGGLLMRLSPKYPDNLMIGMEIRVKVSDYVNEKIQALRKHHAEAGHYRNVAVLRSNAMKYMPNYFHKGQLSKMFFLFPDPHFKNKKHKWRIITPTLLSEYAYVLREGGIIYTITDVKDLHEWMVKHLSEHPLFERLTEEEMKKDPIVEMLFESTEEGQKVTRNDGGKWPAIFRRLPNPAL</sequence>
<proteinExistence type="inferred from homology"/>
<name>TRMB_CAEEL</name>
<feature type="chain" id="PRO_0000171433" description="tRNA (guanine-N(7)-)-methyltransferase">
    <location>
        <begin position="1"/>
        <end position="256"/>
    </location>
</feature>
<feature type="region of interest" description="Disordered" evidence="2">
    <location>
        <begin position="17"/>
        <end position="45"/>
    </location>
</feature>
<feature type="compositionally biased region" description="Basic residues" evidence="2">
    <location>
        <begin position="26"/>
        <end position="36"/>
    </location>
</feature>
<feature type="active site" evidence="1">
    <location>
        <position position="155"/>
    </location>
</feature>
<feature type="binding site" evidence="1">
    <location>
        <position position="74"/>
    </location>
    <ligand>
        <name>S-adenosyl-L-methionine</name>
        <dbReference type="ChEBI" id="CHEBI:59789"/>
    </ligand>
</feature>
<feature type="binding site" evidence="1">
    <location>
        <begin position="97"/>
        <end position="98"/>
    </location>
    <ligand>
        <name>S-adenosyl-L-methionine</name>
        <dbReference type="ChEBI" id="CHEBI:59789"/>
    </ligand>
</feature>
<feature type="binding site" evidence="1">
    <location>
        <begin position="132"/>
        <end position="133"/>
    </location>
    <ligand>
        <name>S-adenosyl-L-methionine</name>
        <dbReference type="ChEBI" id="CHEBI:59789"/>
    </ligand>
</feature>
<feature type="binding site" evidence="1">
    <location>
        <position position="152"/>
    </location>
    <ligand>
        <name>S-adenosyl-L-methionine</name>
        <dbReference type="ChEBI" id="CHEBI:59789"/>
    </ligand>
</feature>
<feature type="binding site" evidence="1">
    <location>
        <begin position="230"/>
        <end position="232"/>
    </location>
    <ligand>
        <name>S-adenosyl-L-methionine</name>
        <dbReference type="ChEBI" id="CHEBI:59789"/>
    </ligand>
</feature>
<dbReference type="EC" id="2.1.1.33" evidence="1"/>
<dbReference type="EMBL" id="BX284602">
    <property type="protein sequence ID" value="CAA91400.1"/>
    <property type="molecule type" value="Genomic_DNA"/>
</dbReference>
<dbReference type="PIR" id="T26090">
    <property type="entry name" value="T26090"/>
</dbReference>
<dbReference type="RefSeq" id="NP_496448.1">
    <property type="nucleotide sequence ID" value="NM_064047.4"/>
</dbReference>
<dbReference type="SMR" id="Q23126"/>
<dbReference type="BioGRID" id="40060">
    <property type="interactions" value="10"/>
</dbReference>
<dbReference type="FunCoup" id="Q23126">
    <property type="interactions" value="1341"/>
</dbReference>
<dbReference type="STRING" id="6239.W02B12.10.1"/>
<dbReference type="PaxDb" id="6239-W02B12.10"/>
<dbReference type="PeptideAtlas" id="Q23126"/>
<dbReference type="EnsemblMetazoa" id="W02B12.10.1">
    <property type="protein sequence ID" value="W02B12.10.1"/>
    <property type="gene ID" value="WBGene00012205"/>
</dbReference>
<dbReference type="GeneID" id="174753"/>
<dbReference type="KEGG" id="cel:CELE_W02B12.10"/>
<dbReference type="UCSC" id="W02B12.10">
    <property type="organism name" value="c. elegans"/>
</dbReference>
<dbReference type="AGR" id="WB:WBGene00012205"/>
<dbReference type="CTD" id="174753"/>
<dbReference type="WormBase" id="W02B12.10">
    <property type="protein sequence ID" value="CE03770"/>
    <property type="gene ID" value="WBGene00012205"/>
    <property type="gene designation" value="metl-1"/>
</dbReference>
<dbReference type="eggNOG" id="KOG3115">
    <property type="taxonomic scope" value="Eukaryota"/>
</dbReference>
<dbReference type="GeneTree" id="ENSGT00390000017840"/>
<dbReference type="HOGENOM" id="CLU_050910_3_1_1"/>
<dbReference type="InParanoid" id="Q23126"/>
<dbReference type="OMA" id="LPNYFAK"/>
<dbReference type="OrthoDB" id="47276at2759"/>
<dbReference type="PhylomeDB" id="Q23126"/>
<dbReference type="UniPathway" id="UPA00989"/>
<dbReference type="PRO" id="PR:Q23126"/>
<dbReference type="Proteomes" id="UP000001940">
    <property type="component" value="Chromosome II"/>
</dbReference>
<dbReference type="Bgee" id="WBGene00012205">
    <property type="expression patterns" value="Expressed in germ line (C elegans) and 4 other cell types or tissues"/>
</dbReference>
<dbReference type="GO" id="GO:0005634">
    <property type="term" value="C:nucleus"/>
    <property type="evidence" value="ECO:0007669"/>
    <property type="project" value="UniProtKB-SubCell"/>
</dbReference>
<dbReference type="GO" id="GO:0043527">
    <property type="term" value="C:tRNA methyltransferase complex"/>
    <property type="evidence" value="ECO:0000318"/>
    <property type="project" value="GO_Central"/>
</dbReference>
<dbReference type="GO" id="GO:0008176">
    <property type="term" value="F:tRNA (guanine(46)-N7)-methyltransferase activity"/>
    <property type="evidence" value="ECO:0000250"/>
    <property type="project" value="UniProtKB"/>
</dbReference>
<dbReference type="GO" id="GO:0000049">
    <property type="term" value="F:tRNA binding"/>
    <property type="evidence" value="ECO:0007669"/>
    <property type="project" value="UniProtKB-UniRule"/>
</dbReference>
<dbReference type="GO" id="GO:0036265">
    <property type="term" value="P:RNA (guanine-N7)-methylation"/>
    <property type="evidence" value="ECO:0000318"/>
    <property type="project" value="GO_Central"/>
</dbReference>
<dbReference type="GO" id="GO:0030488">
    <property type="term" value="P:tRNA methylation"/>
    <property type="evidence" value="ECO:0000318"/>
    <property type="project" value="GO_Central"/>
</dbReference>
<dbReference type="GO" id="GO:0006400">
    <property type="term" value="P:tRNA modification"/>
    <property type="evidence" value="ECO:0000250"/>
    <property type="project" value="UniProtKB"/>
</dbReference>
<dbReference type="CDD" id="cd02440">
    <property type="entry name" value="AdoMet_MTases"/>
    <property type="match status" value="1"/>
</dbReference>
<dbReference type="FunFam" id="3.40.50.150:FF:000060">
    <property type="entry name" value="tRNA (guanine-N(7)-)-methyltransferase"/>
    <property type="match status" value="1"/>
</dbReference>
<dbReference type="Gene3D" id="3.40.50.150">
    <property type="entry name" value="Vaccinia Virus protein VP39"/>
    <property type="match status" value="1"/>
</dbReference>
<dbReference type="HAMAP" id="MF_03055">
    <property type="entry name" value="tRNA_methyltr_TrmB_euk"/>
    <property type="match status" value="1"/>
</dbReference>
<dbReference type="InterPro" id="IPR029063">
    <property type="entry name" value="SAM-dependent_MTases_sf"/>
</dbReference>
<dbReference type="InterPro" id="IPR025763">
    <property type="entry name" value="Trm8_euk"/>
</dbReference>
<dbReference type="InterPro" id="IPR003358">
    <property type="entry name" value="tRNA_(Gua-N-7)_MeTrfase_Trmb"/>
</dbReference>
<dbReference type="NCBIfam" id="TIGR00091">
    <property type="entry name" value="tRNA (guanosine(46)-N7)-methyltransferase TrmB"/>
    <property type="match status" value="1"/>
</dbReference>
<dbReference type="PANTHER" id="PTHR23417">
    <property type="entry name" value="3-DEOXY-D-MANNO-OCTULOSONIC-ACID TRANSFERASE/TRNA GUANINE-N 7 - -METHYLTRANSFERASE"/>
    <property type="match status" value="1"/>
</dbReference>
<dbReference type="PANTHER" id="PTHR23417:SF16">
    <property type="entry name" value="TRNA (GUANINE-N(7)-)-METHYLTRANSFERASE"/>
    <property type="match status" value="1"/>
</dbReference>
<dbReference type="Pfam" id="PF02390">
    <property type="entry name" value="Methyltransf_4"/>
    <property type="match status" value="1"/>
</dbReference>
<dbReference type="SUPFAM" id="SSF53335">
    <property type="entry name" value="S-adenosyl-L-methionine-dependent methyltransferases"/>
    <property type="match status" value="1"/>
</dbReference>
<dbReference type="PROSITE" id="PS51625">
    <property type="entry name" value="SAM_MT_TRMB"/>
    <property type="match status" value="1"/>
</dbReference>
<organism>
    <name type="scientific">Caenorhabditis elegans</name>
    <dbReference type="NCBI Taxonomy" id="6239"/>
    <lineage>
        <taxon>Eukaryota</taxon>
        <taxon>Metazoa</taxon>
        <taxon>Ecdysozoa</taxon>
        <taxon>Nematoda</taxon>
        <taxon>Chromadorea</taxon>
        <taxon>Rhabditida</taxon>
        <taxon>Rhabditina</taxon>
        <taxon>Rhabditomorpha</taxon>
        <taxon>Rhabditoidea</taxon>
        <taxon>Rhabditidae</taxon>
        <taxon>Peloderinae</taxon>
        <taxon>Caenorhabditis</taxon>
    </lineage>
</organism>
<gene>
    <name evidence="3" type="primary">metl-1</name>
    <name evidence="3" type="ORF">W02B12.10</name>
</gene>